<sequence length="58" mass="6409">MSTIKIKQVKSRIGAPADQKRTLDALGLRKLNRVVEHESTSSILGMVDKVKHLVAIVK</sequence>
<gene>
    <name evidence="1" type="primary">rpmD</name>
    <name type="ordered locus">BT_2709</name>
</gene>
<protein>
    <recommendedName>
        <fullName evidence="1">Large ribosomal subunit protein uL30</fullName>
    </recommendedName>
    <alternativeName>
        <fullName evidence="2">50S ribosomal protein L30</fullName>
    </alternativeName>
</protein>
<organism>
    <name type="scientific">Bacteroides thetaiotaomicron (strain ATCC 29148 / DSM 2079 / JCM 5827 / CCUG 10774 / NCTC 10582 / VPI-5482 / E50)</name>
    <dbReference type="NCBI Taxonomy" id="226186"/>
    <lineage>
        <taxon>Bacteria</taxon>
        <taxon>Pseudomonadati</taxon>
        <taxon>Bacteroidota</taxon>
        <taxon>Bacteroidia</taxon>
        <taxon>Bacteroidales</taxon>
        <taxon>Bacteroidaceae</taxon>
        <taxon>Bacteroides</taxon>
    </lineage>
</organism>
<dbReference type="EMBL" id="AE015928">
    <property type="protein sequence ID" value="AAO77815.1"/>
    <property type="molecule type" value="Genomic_DNA"/>
</dbReference>
<dbReference type="RefSeq" id="NP_811621.1">
    <property type="nucleotide sequence ID" value="NC_004663.1"/>
</dbReference>
<dbReference type="RefSeq" id="WP_011108454.1">
    <property type="nucleotide sequence ID" value="NC_004663.1"/>
</dbReference>
<dbReference type="SMR" id="Q8A494"/>
<dbReference type="FunCoup" id="Q8A494">
    <property type="interactions" value="394"/>
</dbReference>
<dbReference type="STRING" id="226186.BT_2709"/>
<dbReference type="PaxDb" id="226186-BT_2709"/>
<dbReference type="EnsemblBacteria" id="AAO77815">
    <property type="protein sequence ID" value="AAO77815"/>
    <property type="gene ID" value="BT_2709"/>
</dbReference>
<dbReference type="GeneID" id="60923880"/>
<dbReference type="KEGG" id="bth:BT_2709"/>
<dbReference type="PATRIC" id="fig|226186.12.peg.2752"/>
<dbReference type="eggNOG" id="COG1841">
    <property type="taxonomic scope" value="Bacteria"/>
</dbReference>
<dbReference type="HOGENOM" id="CLU_131047_1_1_10"/>
<dbReference type="InParanoid" id="Q8A494"/>
<dbReference type="OrthoDB" id="9812790at2"/>
<dbReference type="Proteomes" id="UP000001414">
    <property type="component" value="Chromosome"/>
</dbReference>
<dbReference type="GO" id="GO:0022625">
    <property type="term" value="C:cytosolic large ribosomal subunit"/>
    <property type="evidence" value="ECO:0000318"/>
    <property type="project" value="GO_Central"/>
</dbReference>
<dbReference type="GO" id="GO:0003735">
    <property type="term" value="F:structural constituent of ribosome"/>
    <property type="evidence" value="ECO:0007669"/>
    <property type="project" value="InterPro"/>
</dbReference>
<dbReference type="GO" id="GO:0006412">
    <property type="term" value="P:translation"/>
    <property type="evidence" value="ECO:0007669"/>
    <property type="project" value="UniProtKB-UniRule"/>
</dbReference>
<dbReference type="CDD" id="cd01658">
    <property type="entry name" value="Ribosomal_L30"/>
    <property type="match status" value="1"/>
</dbReference>
<dbReference type="FunFam" id="3.30.1390.20:FF:000001">
    <property type="entry name" value="50S ribosomal protein L30"/>
    <property type="match status" value="1"/>
</dbReference>
<dbReference type="Gene3D" id="3.30.1390.20">
    <property type="entry name" value="Ribosomal protein L30, ferredoxin-like fold domain"/>
    <property type="match status" value="1"/>
</dbReference>
<dbReference type="HAMAP" id="MF_01371_B">
    <property type="entry name" value="Ribosomal_uL30_B"/>
    <property type="match status" value="1"/>
</dbReference>
<dbReference type="InterPro" id="IPR036919">
    <property type="entry name" value="Ribo_uL30_ferredoxin-like_sf"/>
</dbReference>
<dbReference type="InterPro" id="IPR005996">
    <property type="entry name" value="Ribosomal_uL30_bac-type"/>
</dbReference>
<dbReference type="InterPro" id="IPR016082">
    <property type="entry name" value="Ribosomal_uL30_ferredoxin-like"/>
</dbReference>
<dbReference type="NCBIfam" id="TIGR01308">
    <property type="entry name" value="rpmD_bact"/>
    <property type="match status" value="1"/>
</dbReference>
<dbReference type="PANTHER" id="PTHR15892:SF2">
    <property type="entry name" value="LARGE RIBOSOMAL SUBUNIT PROTEIN UL30M"/>
    <property type="match status" value="1"/>
</dbReference>
<dbReference type="PANTHER" id="PTHR15892">
    <property type="entry name" value="MITOCHONDRIAL RIBOSOMAL PROTEIN L30"/>
    <property type="match status" value="1"/>
</dbReference>
<dbReference type="Pfam" id="PF00327">
    <property type="entry name" value="Ribosomal_L30"/>
    <property type="match status" value="1"/>
</dbReference>
<dbReference type="PIRSF" id="PIRSF002211">
    <property type="entry name" value="Ribosomal_L30_bac-type"/>
    <property type="match status" value="1"/>
</dbReference>
<dbReference type="SUPFAM" id="SSF55129">
    <property type="entry name" value="Ribosomal protein L30p/L7e"/>
    <property type="match status" value="1"/>
</dbReference>
<feature type="chain" id="PRO_0000273746" description="Large ribosomal subunit protein uL30">
    <location>
        <begin position="1"/>
        <end position="58"/>
    </location>
</feature>
<proteinExistence type="inferred from homology"/>
<comment type="subunit">
    <text evidence="1">Part of the 50S ribosomal subunit.</text>
</comment>
<comment type="similarity">
    <text evidence="1">Belongs to the universal ribosomal protein uL30 family.</text>
</comment>
<evidence type="ECO:0000255" key="1">
    <source>
        <dbReference type="HAMAP-Rule" id="MF_01371"/>
    </source>
</evidence>
<evidence type="ECO:0000305" key="2"/>
<name>RL30_BACTN</name>
<accession>Q8A494</accession>
<keyword id="KW-1185">Reference proteome</keyword>
<keyword id="KW-0687">Ribonucleoprotein</keyword>
<keyword id="KW-0689">Ribosomal protein</keyword>
<reference key="1">
    <citation type="journal article" date="2003" name="Science">
        <title>A genomic view of the human-Bacteroides thetaiotaomicron symbiosis.</title>
        <authorList>
            <person name="Xu J."/>
            <person name="Bjursell M.K."/>
            <person name="Himrod J."/>
            <person name="Deng S."/>
            <person name="Carmichael L.K."/>
            <person name="Chiang H.C."/>
            <person name="Hooper L.V."/>
            <person name="Gordon J.I."/>
        </authorList>
    </citation>
    <scope>NUCLEOTIDE SEQUENCE [LARGE SCALE GENOMIC DNA]</scope>
    <source>
        <strain>ATCC 29148 / DSM 2079 / JCM 5827 / CCUG 10774 / NCTC 10582 / VPI-5482 / E50</strain>
    </source>
</reference>